<comment type="function">
    <text evidence="1">Accelerates the degradation of transcripts by removing pyrophosphate from the 5'-end of triphosphorylated RNA, leading to a more labile monophosphorylated state that can stimulate subsequent ribonuclease cleavage.</text>
</comment>
<comment type="cofactor">
    <cofactor evidence="1">
        <name>a divalent metal cation</name>
        <dbReference type="ChEBI" id="CHEBI:60240"/>
    </cofactor>
</comment>
<comment type="similarity">
    <text evidence="1">Belongs to the Nudix hydrolase family. RppH subfamily.</text>
</comment>
<organism>
    <name type="scientific">Burkholderia multivorans (strain ATCC 17616 / 249)</name>
    <dbReference type="NCBI Taxonomy" id="395019"/>
    <lineage>
        <taxon>Bacteria</taxon>
        <taxon>Pseudomonadati</taxon>
        <taxon>Pseudomonadota</taxon>
        <taxon>Betaproteobacteria</taxon>
        <taxon>Burkholderiales</taxon>
        <taxon>Burkholderiaceae</taxon>
        <taxon>Burkholderia</taxon>
        <taxon>Burkholderia cepacia complex</taxon>
    </lineage>
</organism>
<keyword id="KW-0378">Hydrolase</keyword>
<keyword id="KW-1185">Reference proteome</keyword>
<reference key="1">
    <citation type="submission" date="2007-10" db="EMBL/GenBank/DDBJ databases">
        <title>Complete sequence of chromosome 1 of Burkholderia multivorans ATCC 17616.</title>
        <authorList>
            <person name="Copeland A."/>
            <person name="Lucas S."/>
            <person name="Lapidus A."/>
            <person name="Barry K."/>
            <person name="Glavina del Rio T."/>
            <person name="Dalin E."/>
            <person name="Tice H."/>
            <person name="Pitluck S."/>
            <person name="Chain P."/>
            <person name="Malfatti S."/>
            <person name="Shin M."/>
            <person name="Vergez L."/>
            <person name="Schmutz J."/>
            <person name="Larimer F."/>
            <person name="Land M."/>
            <person name="Hauser L."/>
            <person name="Kyrpides N."/>
            <person name="Kim E."/>
            <person name="Tiedje J."/>
            <person name="Richardson P."/>
        </authorList>
    </citation>
    <scope>NUCLEOTIDE SEQUENCE [LARGE SCALE GENOMIC DNA]</scope>
    <source>
        <strain>ATCC 17616 / 249</strain>
    </source>
</reference>
<reference key="2">
    <citation type="submission" date="2007-04" db="EMBL/GenBank/DDBJ databases">
        <title>Complete genome sequence of Burkholderia multivorans ATCC 17616.</title>
        <authorList>
            <person name="Ohtsubo Y."/>
            <person name="Yamashita A."/>
            <person name="Kurokawa K."/>
            <person name="Takami H."/>
            <person name="Yuhara S."/>
            <person name="Nishiyama E."/>
            <person name="Endo R."/>
            <person name="Miyazaki R."/>
            <person name="Ono A."/>
            <person name="Yano K."/>
            <person name="Ito M."/>
            <person name="Sota M."/>
            <person name="Yuji N."/>
            <person name="Hattori M."/>
            <person name="Tsuda M."/>
        </authorList>
    </citation>
    <scope>NUCLEOTIDE SEQUENCE [LARGE SCALE GENOMIC DNA]</scope>
    <source>
        <strain>ATCC 17616 / 249</strain>
    </source>
</reference>
<gene>
    <name evidence="1" type="primary">rppH</name>
    <name evidence="1" type="synonym">nudH</name>
    <name type="ordered locus">Bmul_2797</name>
    <name type="ordered locus">BMULJ_00440</name>
</gene>
<proteinExistence type="inferred from homology"/>
<evidence type="ECO:0000255" key="1">
    <source>
        <dbReference type="HAMAP-Rule" id="MF_00298"/>
    </source>
</evidence>
<dbReference type="EC" id="3.6.1.-" evidence="1"/>
<dbReference type="EMBL" id="CP000868">
    <property type="protein sequence ID" value="ABX16481.1"/>
    <property type="molecule type" value="Genomic_DNA"/>
</dbReference>
<dbReference type="EMBL" id="AP009385">
    <property type="protein sequence ID" value="BAG42407.1"/>
    <property type="molecule type" value="Genomic_DNA"/>
</dbReference>
<dbReference type="RefSeq" id="WP_012214161.1">
    <property type="nucleotide sequence ID" value="NC_010084.1"/>
</dbReference>
<dbReference type="SMR" id="A9AI57"/>
<dbReference type="STRING" id="395019.BMULJ_00440"/>
<dbReference type="KEGG" id="bmj:BMULJ_00440"/>
<dbReference type="KEGG" id="bmu:Bmul_2797"/>
<dbReference type="eggNOG" id="COG0494">
    <property type="taxonomic scope" value="Bacteria"/>
</dbReference>
<dbReference type="HOGENOM" id="CLU_087195_0_1_4"/>
<dbReference type="Proteomes" id="UP000008815">
    <property type="component" value="Chromosome 1"/>
</dbReference>
<dbReference type="GO" id="GO:0016462">
    <property type="term" value="F:pyrophosphatase activity"/>
    <property type="evidence" value="ECO:0007669"/>
    <property type="project" value="UniProtKB-ARBA"/>
</dbReference>
<dbReference type="CDD" id="cd03671">
    <property type="entry name" value="NUDIX_Ap4A_hydrolase_plant_like"/>
    <property type="match status" value="1"/>
</dbReference>
<dbReference type="Gene3D" id="3.90.79.10">
    <property type="entry name" value="Nucleoside Triphosphate Pyrophosphohydrolase"/>
    <property type="match status" value="1"/>
</dbReference>
<dbReference type="HAMAP" id="MF_00298">
    <property type="entry name" value="Nudix_RppH"/>
    <property type="match status" value="1"/>
</dbReference>
<dbReference type="InterPro" id="IPR020476">
    <property type="entry name" value="Nudix_hydrolase"/>
</dbReference>
<dbReference type="InterPro" id="IPR015797">
    <property type="entry name" value="NUDIX_hydrolase-like_dom_sf"/>
</dbReference>
<dbReference type="InterPro" id="IPR020084">
    <property type="entry name" value="NUDIX_hydrolase_CS"/>
</dbReference>
<dbReference type="InterPro" id="IPR000086">
    <property type="entry name" value="NUDIX_hydrolase_dom"/>
</dbReference>
<dbReference type="InterPro" id="IPR022927">
    <property type="entry name" value="RppH"/>
</dbReference>
<dbReference type="NCBIfam" id="NF001935">
    <property type="entry name" value="PRK00714.1-2"/>
    <property type="match status" value="1"/>
</dbReference>
<dbReference type="NCBIfam" id="NF001937">
    <property type="entry name" value="PRK00714.1-4"/>
    <property type="match status" value="1"/>
</dbReference>
<dbReference type="NCBIfam" id="NF001938">
    <property type="entry name" value="PRK00714.1-5"/>
    <property type="match status" value="1"/>
</dbReference>
<dbReference type="PANTHER" id="PTHR43736">
    <property type="entry name" value="ADP-RIBOSE PYROPHOSPHATASE"/>
    <property type="match status" value="1"/>
</dbReference>
<dbReference type="PANTHER" id="PTHR43736:SF1">
    <property type="entry name" value="DIHYDRONEOPTERIN TRIPHOSPHATE DIPHOSPHATASE"/>
    <property type="match status" value="1"/>
</dbReference>
<dbReference type="Pfam" id="PF00293">
    <property type="entry name" value="NUDIX"/>
    <property type="match status" value="1"/>
</dbReference>
<dbReference type="PRINTS" id="PR00502">
    <property type="entry name" value="NUDIXFAMILY"/>
</dbReference>
<dbReference type="SUPFAM" id="SSF55811">
    <property type="entry name" value="Nudix"/>
    <property type="match status" value="1"/>
</dbReference>
<dbReference type="PROSITE" id="PS51462">
    <property type="entry name" value="NUDIX"/>
    <property type="match status" value="1"/>
</dbReference>
<dbReference type="PROSITE" id="PS00893">
    <property type="entry name" value="NUDIX_BOX"/>
    <property type="match status" value="1"/>
</dbReference>
<sequence>MLDREGFRPNVGIILLNARNEVFWGKRLREHSWQFPQGGIKYGETPMQAMYRELHEETGLLPEHVKIIGRTRDWLRYEVPDKFIKREVRGHYRGQKQIWFLLRMLGRDCDICLRATDHPEFDAWRWNEYWVPLDAVIEFKRDVYQLALTELSRFLRRPAQRADKPRGPRLPRYPRVIAAQPAETLTIVDTSVVCSEVEVEASTLDEMPPRVIVGK</sequence>
<feature type="chain" id="PRO_1000115270" description="RNA pyrophosphohydrolase">
    <location>
        <begin position="1"/>
        <end position="215"/>
    </location>
</feature>
<feature type="domain" description="Nudix hydrolase" evidence="1">
    <location>
        <begin position="6"/>
        <end position="149"/>
    </location>
</feature>
<feature type="short sequence motif" description="Nudix box">
    <location>
        <begin position="38"/>
        <end position="59"/>
    </location>
</feature>
<accession>A9AI57</accession>
<protein>
    <recommendedName>
        <fullName evidence="1">RNA pyrophosphohydrolase</fullName>
        <ecNumber evidence="1">3.6.1.-</ecNumber>
    </recommendedName>
    <alternativeName>
        <fullName evidence="1">(Di)nucleoside polyphosphate hydrolase</fullName>
    </alternativeName>
</protein>
<name>RPPH_BURM1</name>